<proteinExistence type="inferred from homology"/>
<name>CAPSA_BPT3</name>
<sequence>MANIQGGQQIGTNQGKGQSAADKLALFLKVFGGEVLTAFARTSVTMPRHMLRSIASGKSAQFPVIGRTKAAYLKPGENLDDKRKDIKHTEKVIHIDGLLTADVLIYDIEDAMNHYDVRAEYTAQLGESLAMAADGAVLAELAGLVNLPDGSNENIEGLGKPTVLTLVKPTTGSLTDPVELGKAIIAQLTIARASLTKNYVPAADRTFYTTPDNYSAILAALMPNAANYQALLDPERGTIRNVMGFEVVEVPHLTAGGAGDTREDAPADQKHAFPATSSTTVKVALDNVVGLFQHRSAVGTVKLKDLALERARRANYQADQIIAKYAMGHGGLRPEAAGAIVLPKVSE</sequence>
<comment type="function">
    <text evidence="1">Assembles with the minor capsid protein to form an icosahedral capsid with a T=7 symmetry, about 60 nm in diameter, and consisting of 415 capsid proteins. The major and minor capsid proteins are incorporated into the capsid in about a 90/10 ratio respectively. Once the capsid formed, encapsidates one single copy of the viral genome.</text>
</comment>
<comment type="subunit">
    <text evidence="2">Homohexamer. Interacts with the connector protein and the minor capsid protein. Interacts with the capsid assembly scaffolding protein; capsid proteins and scaffolding proteins form building blocks that assemble to form the procapsid, each hexamer of the major capsid protein interacting with 2 scaffolding proteins.</text>
</comment>
<comment type="subcellular location">
    <subcellularLocation>
        <location evidence="2">Virion</location>
    </subcellularLocation>
</comment>
<comment type="alternative products">
    <event type="ribosomal frameshifting"/>
    <isoform>
        <id>P19693-1</id>
        <name>Major capsid protein 10A</name>
        <sequence type="displayed"/>
    </isoform>
    <isoform>
        <id>P19728-1</id>
        <name>Minor capsid protein 10B</name>
        <sequence type="external"/>
    </isoform>
</comment>
<comment type="domain">
    <text evidence="2">The N-terminus interacts with an internal region of the major capsid protein subunit in an adjacent capsomere (intercapsomeric interactions) to stabilize the capsid.</text>
</comment>
<comment type="miscellaneous">
    <molecule>Isoform Major capsid protein 10A</molecule>
    <text evidence="3">Produced by conventional translation.</text>
</comment>
<comment type="similarity">
    <text evidence="2">Belongs to the T7virus major capsid protein family.</text>
</comment>
<protein>
    <recommendedName>
        <fullName evidence="2">Major capsid protein</fullName>
    </recommendedName>
    <alternativeName>
        <fullName evidence="1">Gene product 10A</fullName>
        <shortName evidence="1">Gp10A</shortName>
    </alternativeName>
    <alternativeName>
        <fullName evidence="2">Major head protein</fullName>
    </alternativeName>
</protein>
<accession>P19693</accession>
<gene>
    <name type="primary">10</name>
</gene>
<dbReference type="EMBL" id="X17255">
    <property type="protein sequence ID" value="CAA35154.1"/>
    <property type="molecule type" value="Genomic_DNA"/>
</dbReference>
<dbReference type="EMBL" id="X15840">
    <property type="protein sequence ID" value="CAB57820.1"/>
    <property type="molecule type" value="Genomic_DNA"/>
</dbReference>
<dbReference type="PIR" id="S04618">
    <property type="entry name" value="VABPA3"/>
</dbReference>
<dbReference type="RefSeq" id="NP_523335.1">
    <molecule id="P19693-1"/>
    <property type="nucleotide sequence ID" value="NC_003298.1"/>
</dbReference>
<dbReference type="SMR" id="P19693"/>
<dbReference type="KEGG" id="vg:927448"/>
<dbReference type="OrthoDB" id="4979at10239"/>
<dbReference type="GO" id="GO:0019028">
    <property type="term" value="C:viral capsid"/>
    <property type="evidence" value="ECO:0007669"/>
    <property type="project" value="UniProtKB-UniRule"/>
</dbReference>
<dbReference type="GO" id="GO:0075523">
    <property type="term" value="P:viral translational frameshifting"/>
    <property type="evidence" value="ECO:0007669"/>
    <property type="project" value="UniProtKB-KW"/>
</dbReference>
<dbReference type="HAMAP" id="MF_04119">
    <property type="entry name" value="CAPSID_PROTEIN_T7"/>
    <property type="match status" value="1"/>
</dbReference>
<dbReference type="InterPro" id="IPR049301">
    <property type="entry name" value="Capsid_Gp10A/Gp10B-like_dom"/>
</dbReference>
<dbReference type="InterPro" id="IPR039009">
    <property type="entry name" value="Capsid_Gp10A/Gp10B_dom"/>
</dbReference>
<dbReference type="Pfam" id="PF21703">
    <property type="entry name" value="Gp10A-like"/>
    <property type="match status" value="1"/>
</dbReference>
<reference key="1">
    <citation type="journal article" date="1989" name="J. Mol. Biol.">
        <title>Nucleotide sequence and complementation studies of the gene 10 region of bacteriophage T3.</title>
        <authorList>
            <person name="Condreay J.P."/>
            <person name="Wright S.E."/>
            <person name="Molineux I.J."/>
        </authorList>
    </citation>
    <scope>NUCLEOTIDE SEQUENCE [GENOMIC DNA]</scope>
    <source>
        <strain>Luria</strain>
    </source>
</reference>
<evidence type="ECO:0000250" key="1">
    <source>
        <dbReference type="UniProtKB" id="P19726"/>
    </source>
</evidence>
<evidence type="ECO:0000255" key="2">
    <source>
        <dbReference type="HAMAP-Rule" id="MF_04119"/>
    </source>
</evidence>
<evidence type="ECO:0000269" key="3">
    <source>
    </source>
</evidence>
<organismHost>
    <name type="scientific">Escherichia coli</name>
    <dbReference type="NCBI Taxonomy" id="562"/>
</organismHost>
<organism>
    <name type="scientific">Enterobacteria phage T3</name>
    <name type="common">Bacteriophage T3</name>
    <dbReference type="NCBI Taxonomy" id="10759"/>
    <lineage>
        <taxon>Viruses</taxon>
        <taxon>Duplodnaviria</taxon>
        <taxon>Heunggongvirae</taxon>
        <taxon>Uroviricota</taxon>
        <taxon>Caudoviricetes</taxon>
        <taxon>Autographiviridae</taxon>
        <taxon>Studiervirinae</taxon>
        <taxon>Teetrevirus</taxon>
        <taxon>Teetrevirus T3</taxon>
    </lineage>
</organism>
<keyword id="KW-0167">Capsid protein</keyword>
<keyword id="KW-0688">Ribosomal frameshifting</keyword>
<keyword id="KW-0946">Virion</keyword>
<feature type="chain" id="PRO_0000106520" description="Major capsid protein">
    <location>
        <begin position="1"/>
        <end position="347"/>
    </location>
</feature>